<protein>
    <recommendedName>
        <fullName evidence="1">Enolase</fullName>
        <ecNumber evidence="1">4.2.1.11</ecNumber>
    </recommendedName>
    <alternativeName>
        <fullName evidence="1">2-phospho-D-glycerate hydro-lyase</fullName>
    </alternativeName>
    <alternativeName>
        <fullName evidence="1">2-phosphoglycerate dehydratase</fullName>
    </alternativeName>
</protein>
<feature type="chain" id="PRO_0000133963" description="Enolase">
    <location>
        <begin position="1"/>
        <end position="425"/>
    </location>
</feature>
<feature type="active site" description="Proton donor" evidence="1">
    <location>
        <position position="205"/>
    </location>
</feature>
<feature type="active site" description="Proton acceptor" evidence="1">
    <location>
        <position position="337"/>
    </location>
</feature>
<feature type="binding site" evidence="1">
    <location>
        <position position="163"/>
    </location>
    <ligand>
        <name>(2R)-2-phosphoglycerate</name>
        <dbReference type="ChEBI" id="CHEBI:58289"/>
    </ligand>
</feature>
<feature type="binding site" evidence="1">
    <location>
        <position position="242"/>
    </location>
    <ligand>
        <name>Mg(2+)</name>
        <dbReference type="ChEBI" id="CHEBI:18420"/>
    </ligand>
</feature>
<feature type="binding site" evidence="1">
    <location>
        <position position="285"/>
    </location>
    <ligand>
        <name>Mg(2+)</name>
        <dbReference type="ChEBI" id="CHEBI:18420"/>
    </ligand>
</feature>
<feature type="binding site" evidence="1">
    <location>
        <position position="312"/>
    </location>
    <ligand>
        <name>Mg(2+)</name>
        <dbReference type="ChEBI" id="CHEBI:18420"/>
    </ligand>
</feature>
<feature type="binding site" evidence="1">
    <location>
        <position position="337"/>
    </location>
    <ligand>
        <name>(2R)-2-phosphoglycerate</name>
        <dbReference type="ChEBI" id="CHEBI:58289"/>
    </ligand>
</feature>
<feature type="binding site" evidence="1">
    <location>
        <position position="366"/>
    </location>
    <ligand>
        <name>(2R)-2-phosphoglycerate</name>
        <dbReference type="ChEBI" id="CHEBI:58289"/>
    </ligand>
</feature>
<feature type="binding site" evidence="1">
    <location>
        <position position="367"/>
    </location>
    <ligand>
        <name>(2R)-2-phosphoglycerate</name>
        <dbReference type="ChEBI" id="CHEBI:58289"/>
    </ligand>
</feature>
<feature type="binding site" evidence="1">
    <location>
        <position position="388"/>
    </location>
    <ligand>
        <name>(2R)-2-phosphoglycerate</name>
        <dbReference type="ChEBI" id="CHEBI:58289"/>
    </ligand>
</feature>
<sequence>MSTIIDIHAREILDSRGNPTVEVDVVLEDGTMGRAAVPSGASTGAYEAVERRDGDKSRYMGKGVLEAVAAVNGEIAEELVGFDATEQVAIDAAMIELDGTENKGRLGANAILGVSLAVAKAAADFTAQPLYRYVGGTSARVLPVPMMNIINGGEHADNPIDIQEFMIMPVAAEDIRDAVRMGAEVFHTLKKELSAAGLSTGIGDEGGFAPNIASTREALDFVLKSIEKAGYKPGEDIYLALDCAATEYFKDGKYVLSGEGKTLSSDENVDYLAALVADYPIISIEDGMAEDDWAGWKALTDRLGGKVQLVGDDLFVTNPARLAEGITRGCANSMLVKVNQIGSLTETLKAVDMAHRARYTNVMSHRSGETEDATIADLAVATNCGQIKTGSLARSDRLAKYNQLIRIEEALGEVAEYAGRSILRG</sequence>
<evidence type="ECO:0000255" key="1">
    <source>
        <dbReference type="HAMAP-Rule" id="MF_00318"/>
    </source>
</evidence>
<dbReference type="EC" id="4.2.1.11" evidence="1"/>
<dbReference type="EMBL" id="CP000031">
    <property type="protein sequence ID" value="AAV95728.1"/>
    <property type="molecule type" value="Genomic_DNA"/>
</dbReference>
<dbReference type="RefSeq" id="WP_011048183.1">
    <property type="nucleotide sequence ID" value="NC_003911.12"/>
</dbReference>
<dbReference type="SMR" id="Q5LQL4"/>
<dbReference type="STRING" id="246200.SPO2474"/>
<dbReference type="PaxDb" id="246200-SPO2474"/>
<dbReference type="KEGG" id="sil:SPO2474"/>
<dbReference type="eggNOG" id="COG0148">
    <property type="taxonomic scope" value="Bacteria"/>
</dbReference>
<dbReference type="HOGENOM" id="CLU_031223_2_1_5"/>
<dbReference type="OrthoDB" id="9804716at2"/>
<dbReference type="UniPathway" id="UPA00109">
    <property type="reaction ID" value="UER00187"/>
</dbReference>
<dbReference type="Proteomes" id="UP000001023">
    <property type="component" value="Chromosome"/>
</dbReference>
<dbReference type="GO" id="GO:0009986">
    <property type="term" value="C:cell surface"/>
    <property type="evidence" value="ECO:0007669"/>
    <property type="project" value="UniProtKB-SubCell"/>
</dbReference>
<dbReference type="GO" id="GO:0005576">
    <property type="term" value="C:extracellular region"/>
    <property type="evidence" value="ECO:0007669"/>
    <property type="project" value="UniProtKB-SubCell"/>
</dbReference>
<dbReference type="GO" id="GO:0000015">
    <property type="term" value="C:phosphopyruvate hydratase complex"/>
    <property type="evidence" value="ECO:0007669"/>
    <property type="project" value="InterPro"/>
</dbReference>
<dbReference type="GO" id="GO:0000287">
    <property type="term" value="F:magnesium ion binding"/>
    <property type="evidence" value="ECO:0007669"/>
    <property type="project" value="UniProtKB-UniRule"/>
</dbReference>
<dbReference type="GO" id="GO:0004634">
    <property type="term" value="F:phosphopyruvate hydratase activity"/>
    <property type="evidence" value="ECO:0007669"/>
    <property type="project" value="UniProtKB-UniRule"/>
</dbReference>
<dbReference type="GO" id="GO:0006096">
    <property type="term" value="P:glycolytic process"/>
    <property type="evidence" value="ECO:0007669"/>
    <property type="project" value="UniProtKB-UniRule"/>
</dbReference>
<dbReference type="CDD" id="cd03313">
    <property type="entry name" value="enolase"/>
    <property type="match status" value="1"/>
</dbReference>
<dbReference type="FunFam" id="3.20.20.120:FF:000001">
    <property type="entry name" value="Enolase"/>
    <property type="match status" value="1"/>
</dbReference>
<dbReference type="FunFam" id="3.30.390.10:FF:000001">
    <property type="entry name" value="Enolase"/>
    <property type="match status" value="1"/>
</dbReference>
<dbReference type="Gene3D" id="3.20.20.120">
    <property type="entry name" value="Enolase-like C-terminal domain"/>
    <property type="match status" value="1"/>
</dbReference>
<dbReference type="Gene3D" id="3.30.390.10">
    <property type="entry name" value="Enolase-like, N-terminal domain"/>
    <property type="match status" value="1"/>
</dbReference>
<dbReference type="HAMAP" id="MF_00318">
    <property type="entry name" value="Enolase"/>
    <property type="match status" value="1"/>
</dbReference>
<dbReference type="InterPro" id="IPR000941">
    <property type="entry name" value="Enolase"/>
</dbReference>
<dbReference type="InterPro" id="IPR036849">
    <property type="entry name" value="Enolase-like_C_sf"/>
</dbReference>
<dbReference type="InterPro" id="IPR029017">
    <property type="entry name" value="Enolase-like_N"/>
</dbReference>
<dbReference type="InterPro" id="IPR020810">
    <property type="entry name" value="Enolase_C"/>
</dbReference>
<dbReference type="InterPro" id="IPR020809">
    <property type="entry name" value="Enolase_CS"/>
</dbReference>
<dbReference type="InterPro" id="IPR020811">
    <property type="entry name" value="Enolase_N"/>
</dbReference>
<dbReference type="NCBIfam" id="TIGR01060">
    <property type="entry name" value="eno"/>
    <property type="match status" value="1"/>
</dbReference>
<dbReference type="PANTHER" id="PTHR11902">
    <property type="entry name" value="ENOLASE"/>
    <property type="match status" value="1"/>
</dbReference>
<dbReference type="PANTHER" id="PTHR11902:SF1">
    <property type="entry name" value="ENOLASE"/>
    <property type="match status" value="1"/>
</dbReference>
<dbReference type="Pfam" id="PF00113">
    <property type="entry name" value="Enolase_C"/>
    <property type="match status" value="1"/>
</dbReference>
<dbReference type="Pfam" id="PF03952">
    <property type="entry name" value="Enolase_N"/>
    <property type="match status" value="1"/>
</dbReference>
<dbReference type="PIRSF" id="PIRSF001400">
    <property type="entry name" value="Enolase"/>
    <property type="match status" value="1"/>
</dbReference>
<dbReference type="PRINTS" id="PR00148">
    <property type="entry name" value="ENOLASE"/>
</dbReference>
<dbReference type="SFLD" id="SFLDS00001">
    <property type="entry name" value="Enolase"/>
    <property type="match status" value="1"/>
</dbReference>
<dbReference type="SFLD" id="SFLDF00002">
    <property type="entry name" value="enolase"/>
    <property type="match status" value="1"/>
</dbReference>
<dbReference type="SMART" id="SM01192">
    <property type="entry name" value="Enolase_C"/>
    <property type="match status" value="1"/>
</dbReference>
<dbReference type="SMART" id="SM01193">
    <property type="entry name" value="Enolase_N"/>
    <property type="match status" value="1"/>
</dbReference>
<dbReference type="SUPFAM" id="SSF51604">
    <property type="entry name" value="Enolase C-terminal domain-like"/>
    <property type="match status" value="1"/>
</dbReference>
<dbReference type="SUPFAM" id="SSF54826">
    <property type="entry name" value="Enolase N-terminal domain-like"/>
    <property type="match status" value="1"/>
</dbReference>
<dbReference type="PROSITE" id="PS00164">
    <property type="entry name" value="ENOLASE"/>
    <property type="match status" value="1"/>
</dbReference>
<gene>
    <name evidence="1" type="primary">eno</name>
    <name type="ordered locus">SPO2474</name>
</gene>
<keyword id="KW-0963">Cytoplasm</keyword>
<keyword id="KW-0324">Glycolysis</keyword>
<keyword id="KW-0456">Lyase</keyword>
<keyword id="KW-0460">Magnesium</keyword>
<keyword id="KW-0479">Metal-binding</keyword>
<keyword id="KW-1185">Reference proteome</keyword>
<keyword id="KW-0964">Secreted</keyword>
<comment type="function">
    <text evidence="1">Catalyzes the reversible conversion of 2-phosphoglycerate (2-PG) into phosphoenolpyruvate (PEP). It is essential for the degradation of carbohydrates via glycolysis.</text>
</comment>
<comment type="catalytic activity">
    <reaction evidence="1">
        <text>(2R)-2-phosphoglycerate = phosphoenolpyruvate + H2O</text>
        <dbReference type="Rhea" id="RHEA:10164"/>
        <dbReference type="ChEBI" id="CHEBI:15377"/>
        <dbReference type="ChEBI" id="CHEBI:58289"/>
        <dbReference type="ChEBI" id="CHEBI:58702"/>
        <dbReference type="EC" id="4.2.1.11"/>
    </reaction>
</comment>
<comment type="cofactor">
    <cofactor evidence="1">
        <name>Mg(2+)</name>
        <dbReference type="ChEBI" id="CHEBI:18420"/>
    </cofactor>
    <text evidence="1">Binds a second Mg(2+) ion via substrate during catalysis.</text>
</comment>
<comment type="pathway">
    <text evidence="1">Carbohydrate degradation; glycolysis; pyruvate from D-glyceraldehyde 3-phosphate: step 4/5.</text>
</comment>
<comment type="subcellular location">
    <subcellularLocation>
        <location evidence="1">Cytoplasm</location>
    </subcellularLocation>
    <subcellularLocation>
        <location evidence="1">Secreted</location>
    </subcellularLocation>
    <subcellularLocation>
        <location evidence="1">Cell surface</location>
    </subcellularLocation>
    <text evidence="1">Fractions of enolase are present in both the cytoplasm and on the cell surface.</text>
</comment>
<comment type="similarity">
    <text evidence="1">Belongs to the enolase family.</text>
</comment>
<accession>Q5LQL4</accession>
<reference key="1">
    <citation type="journal article" date="2004" name="Nature">
        <title>Genome sequence of Silicibacter pomeroyi reveals adaptations to the marine environment.</title>
        <authorList>
            <person name="Moran M.A."/>
            <person name="Buchan A."/>
            <person name="Gonzalez J.M."/>
            <person name="Heidelberg J.F."/>
            <person name="Whitman W.B."/>
            <person name="Kiene R.P."/>
            <person name="Henriksen J.R."/>
            <person name="King G.M."/>
            <person name="Belas R."/>
            <person name="Fuqua C."/>
            <person name="Brinkac L.M."/>
            <person name="Lewis M."/>
            <person name="Johri S."/>
            <person name="Weaver B."/>
            <person name="Pai G."/>
            <person name="Eisen J.A."/>
            <person name="Rahe E."/>
            <person name="Sheldon W.M."/>
            <person name="Ye W."/>
            <person name="Miller T.R."/>
            <person name="Carlton J."/>
            <person name="Rasko D.A."/>
            <person name="Paulsen I.T."/>
            <person name="Ren Q."/>
            <person name="Daugherty S.C."/>
            <person name="DeBoy R.T."/>
            <person name="Dodson R.J."/>
            <person name="Durkin A.S."/>
            <person name="Madupu R."/>
            <person name="Nelson W.C."/>
            <person name="Sullivan S.A."/>
            <person name="Rosovitz M.J."/>
            <person name="Haft D.H."/>
            <person name="Selengut J."/>
            <person name="Ward N."/>
        </authorList>
    </citation>
    <scope>NUCLEOTIDE SEQUENCE [LARGE SCALE GENOMIC DNA]</scope>
    <source>
        <strain>ATCC 700808 / DSM 15171 / DSS-3</strain>
    </source>
</reference>
<reference key="2">
    <citation type="journal article" date="2014" name="Stand. Genomic Sci.">
        <title>An updated genome annotation for the model marine bacterium Ruegeria pomeroyi DSS-3.</title>
        <authorList>
            <person name="Rivers A.R."/>
            <person name="Smith C.B."/>
            <person name="Moran M.A."/>
        </authorList>
    </citation>
    <scope>GENOME REANNOTATION</scope>
    <source>
        <strain>ATCC 700808 / DSM 15171 / DSS-3</strain>
    </source>
</reference>
<name>ENO_RUEPO</name>
<organism>
    <name type="scientific">Ruegeria pomeroyi (strain ATCC 700808 / DSM 15171 / DSS-3)</name>
    <name type="common">Silicibacter pomeroyi</name>
    <dbReference type="NCBI Taxonomy" id="246200"/>
    <lineage>
        <taxon>Bacteria</taxon>
        <taxon>Pseudomonadati</taxon>
        <taxon>Pseudomonadota</taxon>
        <taxon>Alphaproteobacteria</taxon>
        <taxon>Rhodobacterales</taxon>
        <taxon>Roseobacteraceae</taxon>
        <taxon>Ruegeria</taxon>
    </lineage>
</organism>
<proteinExistence type="inferred from homology"/>